<sequence length="228" mass="26467">MAAPATRSRYLLRLTVTLGPRSRSYHAPPPPRRRPAPHWPDRENLMTPRWQLTPRYAAKQFGRHGAISGVPPASLWPSSEQLCELEAEEREWYPSLATMQESLRVQQQAAEARRQAREQHIAECMAKMPQMIENWRKQKRERWEKIQADKERRARLQAEAQEQLGYHVDPRSARFQELLQDLDKQQRKRLKEERQRQKKEARIAAMASAEGQDSAEAQDSAASGKPSS</sequence>
<name>G45IP_RAT</name>
<protein>
    <recommendedName>
        <fullName evidence="4">Large ribosomal subunit protein mL64</fullName>
    </recommendedName>
    <alternativeName>
        <fullName>39S ribosomal protein L59, mitochondrial</fullName>
        <shortName>MRP-L59</shortName>
    </alternativeName>
    <alternativeName>
        <fullName>Growth arrest and DNA damage-inducible proteins-interacting protein 1</fullName>
    </alternativeName>
</protein>
<dbReference type="EMBL" id="CF977882">
    <property type="status" value="NOT_ANNOTATED_CDS"/>
    <property type="molecule type" value="mRNA"/>
</dbReference>
<dbReference type="EMBL" id="BC083178">
    <property type="protein sequence ID" value="AAH83178.1"/>
    <property type="molecule type" value="mRNA"/>
</dbReference>
<dbReference type="RefSeq" id="NP_001093974.1">
    <property type="nucleotide sequence ID" value="NM_001100504.1"/>
</dbReference>
<dbReference type="SMR" id="Q5XJW2"/>
<dbReference type="FunCoup" id="Q5XJW2">
    <property type="interactions" value="1119"/>
</dbReference>
<dbReference type="STRING" id="10116.ENSRNOP00000004027"/>
<dbReference type="iPTMnet" id="Q5XJW2"/>
<dbReference type="PhosphoSitePlus" id="Q5XJW2"/>
<dbReference type="jPOST" id="Q5XJW2"/>
<dbReference type="PaxDb" id="10116-ENSRNOP00000004027"/>
<dbReference type="Ensembl" id="ENSRNOT00000004027.8">
    <property type="protein sequence ID" value="ENSRNOP00000004027.4"/>
    <property type="gene ID" value="ENSRNOG00000003011.8"/>
</dbReference>
<dbReference type="GeneID" id="288916"/>
<dbReference type="KEGG" id="rno:288916"/>
<dbReference type="AGR" id="RGD:1309249"/>
<dbReference type="CTD" id="90480"/>
<dbReference type="RGD" id="1309249">
    <property type="gene designation" value="Gadd45gip1"/>
</dbReference>
<dbReference type="eggNOG" id="KOG4848">
    <property type="taxonomic scope" value="Eukaryota"/>
</dbReference>
<dbReference type="GeneTree" id="ENSGT00390000013719"/>
<dbReference type="HOGENOM" id="CLU_102022_0_0_1"/>
<dbReference type="InParanoid" id="Q5XJW2"/>
<dbReference type="OMA" id="EPHSWIH"/>
<dbReference type="OrthoDB" id="6247992at2759"/>
<dbReference type="PhylomeDB" id="Q5XJW2"/>
<dbReference type="TreeFam" id="TF323794"/>
<dbReference type="Reactome" id="R-RNO-5389840">
    <property type="pathway name" value="Mitochondrial translation elongation"/>
</dbReference>
<dbReference type="Reactome" id="R-RNO-5419276">
    <property type="pathway name" value="Mitochondrial translation termination"/>
</dbReference>
<dbReference type="PRO" id="PR:Q5XJW2"/>
<dbReference type="Proteomes" id="UP000002494">
    <property type="component" value="Chromosome 19"/>
</dbReference>
<dbReference type="Bgee" id="ENSRNOG00000003011">
    <property type="expression patterns" value="Expressed in skeletal muscle tissue and 20 other cell types or tissues"/>
</dbReference>
<dbReference type="GO" id="GO:0005739">
    <property type="term" value="C:mitochondrion"/>
    <property type="evidence" value="ECO:0000318"/>
    <property type="project" value="GO_Central"/>
</dbReference>
<dbReference type="GO" id="GO:0005654">
    <property type="term" value="C:nucleoplasm"/>
    <property type="evidence" value="ECO:0007669"/>
    <property type="project" value="Ensembl"/>
</dbReference>
<dbReference type="GO" id="GO:1990904">
    <property type="term" value="C:ribonucleoprotein complex"/>
    <property type="evidence" value="ECO:0007669"/>
    <property type="project" value="UniProtKB-KW"/>
</dbReference>
<dbReference type="GO" id="GO:0005840">
    <property type="term" value="C:ribosome"/>
    <property type="evidence" value="ECO:0007669"/>
    <property type="project" value="UniProtKB-KW"/>
</dbReference>
<dbReference type="Gene3D" id="6.10.280.120">
    <property type="entry name" value="Growth arrest and DNA-damage-inducible proteins-interacting protein 1"/>
    <property type="match status" value="1"/>
</dbReference>
<dbReference type="InterPro" id="IPR018472">
    <property type="entry name" value="Ribosomal_mL64"/>
</dbReference>
<dbReference type="InterPro" id="IPR043035">
    <property type="entry name" value="Ribosomal_mL64_sf"/>
</dbReference>
<dbReference type="PANTHER" id="PTHR31761">
    <property type="entry name" value="GROWTH ARREST AND DNA DAMAGE-INDUCIBLE PROTEINS-INTERACTING PROTEIN 1 GADD45GIP1"/>
    <property type="match status" value="1"/>
</dbReference>
<dbReference type="PANTHER" id="PTHR31761:SF1">
    <property type="entry name" value="LARGE RIBOSOMAL SUBUNIT PROTEIN ML64"/>
    <property type="match status" value="1"/>
</dbReference>
<dbReference type="Pfam" id="PF10147">
    <property type="entry name" value="CR6_interact"/>
    <property type="match status" value="1"/>
</dbReference>
<keyword id="KW-0131">Cell cycle</keyword>
<keyword id="KW-0175">Coiled coil</keyword>
<keyword id="KW-0496">Mitochondrion</keyword>
<keyword id="KW-0539">Nucleus</keyword>
<keyword id="KW-1185">Reference proteome</keyword>
<keyword id="KW-0687">Ribonucleoprotein</keyword>
<keyword id="KW-0689">Ribosomal protein</keyword>
<gene>
    <name type="primary">Gadd45gip1</name>
    <name type="synonym">Mrpl59</name>
</gene>
<accession>Q5XJW2</accession>
<evidence type="ECO:0000250" key="1">
    <source>
        <dbReference type="UniProtKB" id="Q8TAE8"/>
    </source>
</evidence>
<evidence type="ECO:0000255" key="2"/>
<evidence type="ECO:0000256" key="3">
    <source>
        <dbReference type="SAM" id="MobiDB-lite"/>
    </source>
</evidence>
<evidence type="ECO:0000305" key="4"/>
<organism>
    <name type="scientific">Rattus norvegicus</name>
    <name type="common">Rat</name>
    <dbReference type="NCBI Taxonomy" id="10116"/>
    <lineage>
        <taxon>Eukaryota</taxon>
        <taxon>Metazoa</taxon>
        <taxon>Chordata</taxon>
        <taxon>Craniata</taxon>
        <taxon>Vertebrata</taxon>
        <taxon>Euteleostomi</taxon>
        <taxon>Mammalia</taxon>
        <taxon>Eutheria</taxon>
        <taxon>Euarchontoglires</taxon>
        <taxon>Glires</taxon>
        <taxon>Rodentia</taxon>
        <taxon>Myomorpha</taxon>
        <taxon>Muroidea</taxon>
        <taxon>Muridae</taxon>
        <taxon>Murinae</taxon>
        <taxon>Rattus</taxon>
    </lineage>
</organism>
<feature type="chain" id="PRO_0000228622" description="Large ribosomal subunit protein mL64">
    <location>
        <begin position="1"/>
        <end position="228"/>
    </location>
</feature>
<feature type="region of interest" description="Disordered" evidence="3">
    <location>
        <begin position="20"/>
        <end position="44"/>
    </location>
</feature>
<feature type="region of interest" description="Disordered" evidence="3">
    <location>
        <begin position="186"/>
        <end position="228"/>
    </location>
</feature>
<feature type="coiled-coil region" evidence="2">
    <location>
        <begin position="98"/>
        <end position="207"/>
    </location>
</feature>
<feature type="short sequence motif" description="Nuclear localization signal" evidence="2">
    <location>
        <begin position="184"/>
        <end position="200"/>
    </location>
</feature>
<feature type="compositionally biased region" description="Basic and acidic residues" evidence="3">
    <location>
        <begin position="186"/>
        <end position="202"/>
    </location>
</feature>
<feature type="compositionally biased region" description="Low complexity" evidence="3">
    <location>
        <begin position="212"/>
        <end position="228"/>
    </location>
</feature>
<reference key="1">
    <citation type="submission" date="2004-06" db="EMBL/GenBank/DDBJ databases">
        <title>Gene expression profiling of highly purified rat retinal ganglion cells.</title>
        <authorList>
            <person name="Farkas R.H."/>
            <person name="Qian J."/>
            <person name="Goldberg J.L."/>
            <person name="Quigley H.A."/>
            <person name="Zack D.J."/>
        </authorList>
    </citation>
    <scope>NUCLEOTIDE SEQUENCE [MRNA] OF 1-181</scope>
    <source>
        <tissue>Retinal ganglion</tissue>
    </source>
</reference>
<reference key="2">
    <citation type="journal article" date="2004" name="Genome Res.">
        <title>The status, quality, and expansion of the NIH full-length cDNA project: the Mammalian Gene Collection (MGC).</title>
        <authorList>
            <consortium name="The MGC Project Team"/>
        </authorList>
    </citation>
    <scope>NUCLEOTIDE SEQUENCE [LARGE SCALE MRNA] OF 4-228</scope>
    <source>
        <tissue>Ovary</tissue>
    </source>
</reference>
<comment type="function">
    <text evidence="1">Acts as a negative regulator of G1 to S cell cycle phase progression by inhibiting cyclin-dependent kinases. Inhibitory effects are additive with GADD45 proteins but also occur in the absence of GADD45 proteins. Acts as a repressor of the orphan nuclear receptor NR4A1 by inhibiting AB domain-mediated transcriptional activity. May be involved in the hormone-mediated regulation of NR4A1 transcriptional activity. May play a role in mitochondrial protein synthesis.</text>
</comment>
<comment type="subunit">
    <text evidence="1">Component of the mitochondrial ribosome large subunit (39S) which comprises a 16S rRNA and about 50 distinct proteins. Interacts with GADD45A, GADD45B and GADD45G. Interacts with NR4A1 via the NR4A1 AB domain. Interacts with ATAD3A and ATAD3B.</text>
</comment>
<comment type="subcellular location">
    <subcellularLocation>
        <location evidence="1">Mitochondrion</location>
    </subcellularLocation>
    <subcellularLocation>
        <location evidence="1">Nucleus</location>
    </subcellularLocation>
    <text evidence="1">Using N-terminally tagged constructs, has been found in the nucleus. C-terminally tagged constructs are targeted exclusively to mitochondria. This discrepancy may be explained by masking of a potential N-terminal mitochondrial targeting signal by the tag.</text>
</comment>
<comment type="similarity">
    <text evidence="4">Belongs to the mitochondrion-specific ribosomal protein mL64 family.</text>
</comment>
<proteinExistence type="evidence at transcript level"/>